<gene>
    <name evidence="1" type="primary">murG</name>
    <name type="ordered locus">azo0884</name>
</gene>
<reference key="1">
    <citation type="journal article" date="2006" name="Nat. Biotechnol.">
        <title>Complete genome of the mutualistic, N2-fixing grass endophyte Azoarcus sp. strain BH72.</title>
        <authorList>
            <person name="Krause A."/>
            <person name="Ramakumar A."/>
            <person name="Bartels D."/>
            <person name="Battistoni F."/>
            <person name="Bekel T."/>
            <person name="Boch J."/>
            <person name="Boehm M."/>
            <person name="Friedrich F."/>
            <person name="Hurek T."/>
            <person name="Krause L."/>
            <person name="Linke B."/>
            <person name="McHardy A.C."/>
            <person name="Sarkar A."/>
            <person name="Schneiker S."/>
            <person name="Syed A.A."/>
            <person name="Thauer R."/>
            <person name="Vorhoelter F.-J."/>
            <person name="Weidner S."/>
            <person name="Puehler A."/>
            <person name="Reinhold-Hurek B."/>
            <person name="Kaiser O."/>
            <person name="Goesmann A."/>
        </authorList>
    </citation>
    <scope>NUCLEOTIDE SEQUENCE [LARGE SCALE GENOMIC DNA]</scope>
    <source>
        <strain>BH72</strain>
    </source>
</reference>
<name>MURG_AZOSB</name>
<organism>
    <name type="scientific">Azoarcus sp. (strain BH72)</name>
    <dbReference type="NCBI Taxonomy" id="418699"/>
    <lineage>
        <taxon>Bacteria</taxon>
        <taxon>Pseudomonadati</taxon>
        <taxon>Pseudomonadota</taxon>
        <taxon>Betaproteobacteria</taxon>
        <taxon>Rhodocyclales</taxon>
        <taxon>Zoogloeaceae</taxon>
        <taxon>Azoarcus</taxon>
    </lineage>
</organism>
<accession>A1K3U6</accession>
<dbReference type="EC" id="2.4.1.227" evidence="1"/>
<dbReference type="EMBL" id="AM406670">
    <property type="protein sequence ID" value="CAL93501.1"/>
    <property type="molecule type" value="Genomic_DNA"/>
</dbReference>
<dbReference type="RefSeq" id="WP_011764618.1">
    <property type="nucleotide sequence ID" value="NC_008702.1"/>
</dbReference>
<dbReference type="SMR" id="A1K3U6"/>
<dbReference type="STRING" id="62928.azo0884"/>
<dbReference type="CAZy" id="GT28">
    <property type="family name" value="Glycosyltransferase Family 28"/>
</dbReference>
<dbReference type="KEGG" id="azo:azo0884"/>
<dbReference type="eggNOG" id="COG0707">
    <property type="taxonomic scope" value="Bacteria"/>
</dbReference>
<dbReference type="HOGENOM" id="CLU_037404_2_0_4"/>
<dbReference type="UniPathway" id="UPA00219"/>
<dbReference type="Proteomes" id="UP000002588">
    <property type="component" value="Chromosome"/>
</dbReference>
<dbReference type="GO" id="GO:0005886">
    <property type="term" value="C:plasma membrane"/>
    <property type="evidence" value="ECO:0007669"/>
    <property type="project" value="UniProtKB-SubCell"/>
</dbReference>
<dbReference type="GO" id="GO:0051991">
    <property type="term" value="F:UDP-N-acetyl-D-glucosamine:N-acetylmuramoyl-L-alanyl-D-glutamyl-meso-2,6-diaminopimelyl-D-alanyl-D-alanine-diphosphoundecaprenol 4-beta-N-acetylglucosaminlytransferase activity"/>
    <property type="evidence" value="ECO:0007669"/>
    <property type="project" value="RHEA"/>
</dbReference>
<dbReference type="GO" id="GO:0050511">
    <property type="term" value="F:undecaprenyldiphospho-muramoylpentapeptide beta-N-acetylglucosaminyltransferase activity"/>
    <property type="evidence" value="ECO:0007669"/>
    <property type="project" value="UniProtKB-UniRule"/>
</dbReference>
<dbReference type="GO" id="GO:0005975">
    <property type="term" value="P:carbohydrate metabolic process"/>
    <property type="evidence" value="ECO:0007669"/>
    <property type="project" value="InterPro"/>
</dbReference>
<dbReference type="GO" id="GO:0051301">
    <property type="term" value="P:cell division"/>
    <property type="evidence" value="ECO:0007669"/>
    <property type="project" value="UniProtKB-KW"/>
</dbReference>
<dbReference type="GO" id="GO:0071555">
    <property type="term" value="P:cell wall organization"/>
    <property type="evidence" value="ECO:0007669"/>
    <property type="project" value="UniProtKB-KW"/>
</dbReference>
<dbReference type="GO" id="GO:0030259">
    <property type="term" value="P:lipid glycosylation"/>
    <property type="evidence" value="ECO:0007669"/>
    <property type="project" value="UniProtKB-UniRule"/>
</dbReference>
<dbReference type="GO" id="GO:0009252">
    <property type="term" value="P:peptidoglycan biosynthetic process"/>
    <property type="evidence" value="ECO:0007669"/>
    <property type="project" value="UniProtKB-UniRule"/>
</dbReference>
<dbReference type="GO" id="GO:0008360">
    <property type="term" value="P:regulation of cell shape"/>
    <property type="evidence" value="ECO:0007669"/>
    <property type="project" value="UniProtKB-KW"/>
</dbReference>
<dbReference type="CDD" id="cd03785">
    <property type="entry name" value="GT28_MurG"/>
    <property type="match status" value="1"/>
</dbReference>
<dbReference type="Gene3D" id="3.40.50.2000">
    <property type="entry name" value="Glycogen Phosphorylase B"/>
    <property type="match status" value="2"/>
</dbReference>
<dbReference type="HAMAP" id="MF_00033">
    <property type="entry name" value="MurG"/>
    <property type="match status" value="1"/>
</dbReference>
<dbReference type="InterPro" id="IPR006009">
    <property type="entry name" value="GlcNAc_MurG"/>
</dbReference>
<dbReference type="InterPro" id="IPR007235">
    <property type="entry name" value="Glyco_trans_28_C"/>
</dbReference>
<dbReference type="InterPro" id="IPR004276">
    <property type="entry name" value="GlycoTrans_28_N"/>
</dbReference>
<dbReference type="NCBIfam" id="TIGR01133">
    <property type="entry name" value="murG"/>
    <property type="match status" value="1"/>
</dbReference>
<dbReference type="PANTHER" id="PTHR21015:SF22">
    <property type="entry name" value="GLYCOSYLTRANSFERASE"/>
    <property type="match status" value="1"/>
</dbReference>
<dbReference type="PANTHER" id="PTHR21015">
    <property type="entry name" value="UDP-N-ACETYLGLUCOSAMINE--N-ACETYLMURAMYL-(PENTAPEPTIDE) PYROPHOSPHORYL-UNDECAPRENOL N-ACETYLGLUCOSAMINE TRANSFERASE 1"/>
    <property type="match status" value="1"/>
</dbReference>
<dbReference type="Pfam" id="PF04101">
    <property type="entry name" value="Glyco_tran_28_C"/>
    <property type="match status" value="1"/>
</dbReference>
<dbReference type="Pfam" id="PF03033">
    <property type="entry name" value="Glyco_transf_28"/>
    <property type="match status" value="1"/>
</dbReference>
<dbReference type="SUPFAM" id="SSF53756">
    <property type="entry name" value="UDP-Glycosyltransferase/glycogen phosphorylase"/>
    <property type="match status" value="1"/>
</dbReference>
<feature type="chain" id="PRO_1000002616" description="UDP-N-acetylglucosamine--N-acetylmuramyl-(pentapeptide) pyrophosphoryl-undecaprenol N-acetylglucosamine transferase">
    <location>
        <begin position="1"/>
        <end position="356"/>
    </location>
</feature>
<feature type="binding site" evidence="1">
    <location>
        <begin position="11"/>
        <end position="13"/>
    </location>
    <ligand>
        <name>UDP-N-acetyl-alpha-D-glucosamine</name>
        <dbReference type="ChEBI" id="CHEBI:57705"/>
    </ligand>
</feature>
<feature type="binding site" evidence="1">
    <location>
        <position position="123"/>
    </location>
    <ligand>
        <name>UDP-N-acetyl-alpha-D-glucosamine</name>
        <dbReference type="ChEBI" id="CHEBI:57705"/>
    </ligand>
</feature>
<feature type="binding site" evidence="1">
    <location>
        <position position="159"/>
    </location>
    <ligand>
        <name>UDP-N-acetyl-alpha-D-glucosamine</name>
        <dbReference type="ChEBI" id="CHEBI:57705"/>
    </ligand>
</feature>
<feature type="binding site" evidence="1">
    <location>
        <position position="187"/>
    </location>
    <ligand>
        <name>UDP-N-acetyl-alpha-D-glucosamine</name>
        <dbReference type="ChEBI" id="CHEBI:57705"/>
    </ligand>
</feature>
<feature type="binding site" evidence="1">
    <location>
        <position position="241"/>
    </location>
    <ligand>
        <name>UDP-N-acetyl-alpha-D-glucosamine</name>
        <dbReference type="ChEBI" id="CHEBI:57705"/>
    </ligand>
</feature>
<feature type="binding site" evidence="1">
    <location>
        <begin position="260"/>
        <end position="265"/>
    </location>
    <ligand>
        <name>UDP-N-acetyl-alpha-D-glucosamine</name>
        <dbReference type="ChEBI" id="CHEBI:57705"/>
    </ligand>
</feature>
<feature type="binding site" evidence="1">
    <location>
        <position position="286"/>
    </location>
    <ligand>
        <name>UDP-N-acetyl-alpha-D-glucosamine</name>
        <dbReference type="ChEBI" id="CHEBI:57705"/>
    </ligand>
</feature>
<evidence type="ECO:0000255" key="1">
    <source>
        <dbReference type="HAMAP-Rule" id="MF_00033"/>
    </source>
</evidence>
<proteinExistence type="inferred from homology"/>
<comment type="function">
    <text evidence="1">Cell wall formation. Catalyzes the transfer of a GlcNAc subunit on undecaprenyl-pyrophosphoryl-MurNAc-pentapeptide (lipid intermediate I) to form undecaprenyl-pyrophosphoryl-MurNAc-(pentapeptide)GlcNAc (lipid intermediate II).</text>
</comment>
<comment type="catalytic activity">
    <reaction evidence="1">
        <text>di-trans,octa-cis-undecaprenyl diphospho-N-acetyl-alpha-D-muramoyl-L-alanyl-D-glutamyl-meso-2,6-diaminopimeloyl-D-alanyl-D-alanine + UDP-N-acetyl-alpha-D-glucosamine = di-trans,octa-cis-undecaprenyl diphospho-[N-acetyl-alpha-D-glucosaminyl-(1-&gt;4)]-N-acetyl-alpha-D-muramoyl-L-alanyl-D-glutamyl-meso-2,6-diaminopimeloyl-D-alanyl-D-alanine + UDP + H(+)</text>
        <dbReference type="Rhea" id="RHEA:31227"/>
        <dbReference type="ChEBI" id="CHEBI:15378"/>
        <dbReference type="ChEBI" id="CHEBI:57705"/>
        <dbReference type="ChEBI" id="CHEBI:58223"/>
        <dbReference type="ChEBI" id="CHEBI:61387"/>
        <dbReference type="ChEBI" id="CHEBI:61388"/>
        <dbReference type="EC" id="2.4.1.227"/>
    </reaction>
</comment>
<comment type="pathway">
    <text evidence="1">Cell wall biogenesis; peptidoglycan biosynthesis.</text>
</comment>
<comment type="subcellular location">
    <subcellularLocation>
        <location evidence="1">Cell inner membrane</location>
        <topology evidence="1">Peripheral membrane protein</topology>
        <orientation evidence="1">Cytoplasmic side</orientation>
    </subcellularLocation>
</comment>
<comment type="similarity">
    <text evidence="1">Belongs to the glycosyltransferase 28 family. MurG subfamily.</text>
</comment>
<protein>
    <recommendedName>
        <fullName evidence="1">UDP-N-acetylglucosamine--N-acetylmuramyl-(pentapeptide) pyrophosphoryl-undecaprenol N-acetylglucosamine transferase</fullName>
        <ecNumber evidence="1">2.4.1.227</ecNumber>
    </recommendedName>
    <alternativeName>
        <fullName evidence="1">Undecaprenyl-PP-MurNAc-pentapeptide-UDPGlcNAc GlcNAc transferase</fullName>
    </alternativeName>
</protein>
<keyword id="KW-0131">Cell cycle</keyword>
<keyword id="KW-0132">Cell division</keyword>
<keyword id="KW-0997">Cell inner membrane</keyword>
<keyword id="KW-1003">Cell membrane</keyword>
<keyword id="KW-0133">Cell shape</keyword>
<keyword id="KW-0961">Cell wall biogenesis/degradation</keyword>
<keyword id="KW-0328">Glycosyltransferase</keyword>
<keyword id="KW-0472">Membrane</keyword>
<keyword id="KW-0573">Peptidoglycan synthesis</keyword>
<keyword id="KW-1185">Reference proteome</keyword>
<keyword id="KW-0808">Transferase</keyword>
<sequence>MKTLLVMAGGTGGHIFPGIAVAEALRAKGWRIVWMGNPDGMEARIVPSRGYDTAWVRFGALRGKGLVRKLLLPVNLLVGFWQALGQLRRIKPDVVLGMGGYITFPGGMMAALLGWPLVLHEQNSVAGLANRVLAGVADRVLSGFPSVLKKAGWVGNPVREDIASVAAPAARFAGRSGPLNVLVVGGSLGAAVLNDTVPKALARIPLEFRPQVVHQAGEKQIDALRAAYAAAGVEGDLRPFIQDMAAAYAGADLVICRAGALTVAELAAVGVASLLVPFPHAVDDHQTGNARFLAEHGGAYLLPQNELDAERLAGILASLDRPQLLQMAEHARAQAKPRATEAVARACEELAEGRKA</sequence>